<sequence>MQEGELAISPISPVAAMPPLGTHVQARCEAQINLLGEGGICKLPGRLRIQPALWSREDVLHWLRWAEQEYSLPCTAEHGFEMNGRALCILTKDDFRHRAPSSGDVLYELLQYIKTQRRALVCGPFFGGIFRLKTPTQHSPVPPEEVTGPSQMDTRRGHLLQPPDPGLTSNFGHLDDPGLARWTPGKEESLNLCHCAELGCRTQGVCSFPAMPQAPIDGRIADCRLLWDYVYQLLLDTRYEPYIKWEDKDAKIFRVVDPNGLARLWGNHKNRVNMTYEKMSRALRHYYKLNIIKKEPGQKLLFRFLKTPGKMVQDKHSHLEPLESQEQDRIEFKDKRPEISP</sequence>
<feature type="chain" id="PRO_0000204123" description="Transcription factor ETV7">
    <location>
        <begin position="1"/>
        <end position="341"/>
    </location>
</feature>
<feature type="domain" description="PNT" evidence="2">
    <location>
        <begin position="33"/>
        <end position="117"/>
    </location>
</feature>
<feature type="DNA-binding region" description="ETS" evidence="1">
    <location>
        <begin position="224"/>
        <end position="305"/>
    </location>
</feature>
<feature type="region of interest" description="Disordered" evidence="3">
    <location>
        <begin position="315"/>
        <end position="341"/>
    </location>
</feature>
<feature type="splice variant" id="VSP_044285" description="In isoform H." evidence="5">
    <location>
        <begin position="1"/>
        <end position="151"/>
    </location>
</feature>
<feature type="splice variant" id="VSP_001473" description="In isoform A." evidence="4">
    <original>MQEGELAISPISPVAAMPPLGTHVQARCEAQINLLGEGGICKLPGRLRIQPALWSREDVLHWLRWAEQEYSLPCTAEHGFEMNGRALCILTKDDFRHRAPSS</original>
    <variation>MHRGARVRDERTRPLHPHQGRLPAPCAQLRSGKRTGFPLSGNP</variation>
    <location>
        <begin position="1"/>
        <end position="102"/>
    </location>
</feature>
<feature type="splice variant" id="VSP_001474" description="In isoform C." evidence="4">
    <location>
        <begin position="1"/>
        <end position="81"/>
    </location>
</feature>
<feature type="splice variant" id="VSP_001475" description="In isoform D and isoform F." evidence="4 5">
    <location>
        <begin position="49"/>
        <end position="103"/>
    </location>
</feature>
<feature type="splice variant" id="VSP_001476" description="In isoform G." evidence="6">
    <location>
        <begin position="145"/>
        <end position="221"/>
    </location>
</feature>
<feature type="splice variant" id="VSP_001477" description="In isoform E and isoform F." evidence="4">
    <original>FLKTPGKMVQDKHSHLEPLESQEQDRIEFKDKRPEISP</original>
    <variation>NGLQLIFIFIWSFQ</variation>
    <location>
        <begin position="304"/>
        <end position="341"/>
    </location>
</feature>
<feature type="sequence variant" id="VAR_059257" description="In dbSNP:rs9394345.">
    <original>A</original>
    <variation>T</variation>
    <location>
        <position position="86"/>
    </location>
</feature>
<feature type="sequence variant" id="VAR_048952" description="In dbSNP:rs9470262.">
    <original>H</original>
    <variation>Y</variation>
    <location>
        <position position="138"/>
    </location>
</feature>
<feature type="sequence variant" id="VAR_048953" description="In dbSNP:rs34306145.">
    <original>G</original>
    <variation>S</variation>
    <location>
        <position position="199"/>
    </location>
</feature>
<feature type="sequence variant" id="VAR_020314" description="In dbSNP:rs2234079.">
    <original>P</original>
    <variation>L</variation>
    <location>
        <position position="212"/>
    </location>
</feature>
<feature type="sequence variant" id="VAR_048954" description="In dbSNP:rs2234080.">
    <original>A</original>
    <variation>V</variation>
    <location>
        <position position="250"/>
    </location>
</feature>
<feature type="sequence conflict" description="In Ref. 1; AAF25007." evidence="7" ref="1">
    <original>R</original>
    <variation>T</variation>
    <location>
        <position position="27"/>
    </location>
</feature>
<feature type="sequence conflict" description="In Ref. 1; AAF25007." evidence="7" ref="1">
    <original>V</original>
    <variation>G</variation>
    <location>
        <position position="255"/>
    </location>
</feature>
<feature type="sequence conflict" description="In Ref. 1; AAF25007." evidence="7" ref="1">
    <original>N</original>
    <variation>D</variation>
    <location>
        <position position="273"/>
    </location>
</feature>
<feature type="sequence conflict" description="In Ref. 1; AAF25007." evidence="7" ref="1">
    <original>M</original>
    <variation>T</variation>
    <location>
        <position position="311"/>
    </location>
</feature>
<protein>
    <recommendedName>
        <fullName>Transcription factor ETV7</fullName>
    </recommendedName>
    <alternativeName>
        <fullName>ETS translocation variant 7</fullName>
    </alternativeName>
    <alternativeName>
        <fullName>ETS-related protein Tel2</fullName>
    </alternativeName>
    <alternativeName>
        <fullName>Tel-related Ets factor</fullName>
    </alternativeName>
    <alternativeName>
        <fullName>Transcription factor Tel-2</fullName>
    </alternativeName>
</protein>
<organism>
    <name type="scientific">Homo sapiens</name>
    <name type="common">Human</name>
    <dbReference type="NCBI Taxonomy" id="9606"/>
    <lineage>
        <taxon>Eukaryota</taxon>
        <taxon>Metazoa</taxon>
        <taxon>Chordata</taxon>
        <taxon>Craniata</taxon>
        <taxon>Vertebrata</taxon>
        <taxon>Euteleostomi</taxon>
        <taxon>Mammalia</taxon>
        <taxon>Eutheria</taxon>
        <taxon>Euarchontoglires</taxon>
        <taxon>Primates</taxon>
        <taxon>Haplorrhini</taxon>
        <taxon>Catarrhini</taxon>
        <taxon>Hominidae</taxon>
        <taxon>Homo</taxon>
    </lineage>
</organism>
<dbReference type="EMBL" id="AF116508">
    <property type="protein sequence ID" value="AAD43250.1"/>
    <property type="molecule type" value="mRNA"/>
</dbReference>
<dbReference type="EMBL" id="AF116509">
    <property type="protein sequence ID" value="AAD43251.1"/>
    <property type="molecule type" value="mRNA"/>
</dbReference>
<dbReference type="EMBL" id="AF116510">
    <property type="protein sequence ID" value="AAD43252.1"/>
    <property type="molecule type" value="mRNA"/>
</dbReference>
<dbReference type="EMBL" id="AF218235">
    <property type="protein sequence ID" value="AAF28350.1"/>
    <property type="molecule type" value="mRNA"/>
</dbReference>
<dbReference type="EMBL" id="AF218365">
    <property type="protein sequence ID" value="AAF44742.1"/>
    <property type="molecule type" value="mRNA"/>
</dbReference>
<dbReference type="EMBL" id="AF218366">
    <property type="protein sequence ID" value="AAF44743.1"/>
    <property type="molecule type" value="mRNA"/>
</dbReference>
<dbReference type="EMBL" id="AF175387">
    <property type="protein sequence ID" value="AAF25007.3"/>
    <property type="molecule type" value="mRNA"/>
</dbReference>
<dbReference type="EMBL" id="AF147782">
    <property type="protein sequence ID" value="AAD33989.1"/>
    <property type="molecule type" value="mRNA"/>
</dbReference>
<dbReference type="EMBL" id="AJ276205">
    <property type="protein sequence ID" value="CAC17012.1"/>
    <property type="molecule type" value="mRNA"/>
</dbReference>
<dbReference type="EMBL" id="AK122796">
    <property type="protein sequence ID" value="BAG53734.1"/>
    <property type="molecule type" value="mRNA"/>
</dbReference>
<dbReference type="EMBL" id="AK301011">
    <property type="protein sequence ID" value="BAG62628.1"/>
    <property type="molecule type" value="mRNA"/>
</dbReference>
<dbReference type="EMBL" id="AK303829">
    <property type="protein sequence ID" value="BAG64776.1"/>
    <property type="molecule type" value="mRNA"/>
</dbReference>
<dbReference type="EMBL" id="Z84484">
    <property type="status" value="NOT_ANNOTATED_CDS"/>
    <property type="molecule type" value="Genomic_DNA"/>
</dbReference>
<dbReference type="EMBL" id="CH471081">
    <property type="protein sequence ID" value="EAX03885.1"/>
    <property type="molecule type" value="Genomic_DNA"/>
</dbReference>
<dbReference type="EMBL" id="CH471081">
    <property type="protein sequence ID" value="EAX03888.1"/>
    <property type="molecule type" value="Genomic_DNA"/>
</dbReference>
<dbReference type="EMBL" id="CH471081">
    <property type="protein sequence ID" value="EAX03890.1"/>
    <property type="molecule type" value="Genomic_DNA"/>
</dbReference>
<dbReference type="EMBL" id="BC035853">
    <property type="protein sequence ID" value="AAH35853.1"/>
    <property type="molecule type" value="mRNA"/>
</dbReference>
<dbReference type="CCDS" id="CCDS4819.1">
    <molecule id="Q9Y603-1"/>
</dbReference>
<dbReference type="CCDS" id="CCDS56422.1">
    <molecule id="Q9Y603-8"/>
</dbReference>
<dbReference type="CCDS" id="CCDS56423.1">
    <molecule id="Q9Y603-4"/>
</dbReference>
<dbReference type="CCDS" id="CCDS56424.1">
    <molecule id="Q9Y603-7"/>
</dbReference>
<dbReference type="CCDS" id="CCDS56425.1">
    <molecule id="Q9Y603-5"/>
</dbReference>
<dbReference type="CCDS" id="CCDS75440.1">
    <molecule id="Q9Y603-2"/>
</dbReference>
<dbReference type="CCDS" id="CCDS75441.1">
    <molecule id="Q9Y603-3"/>
</dbReference>
<dbReference type="CCDS" id="CCDS78131.1">
    <molecule id="Q9Y603-6"/>
</dbReference>
<dbReference type="RefSeq" id="NP_001193964.1">
    <molecule id="Q9Y603-5"/>
    <property type="nucleotide sequence ID" value="NM_001207035.2"/>
</dbReference>
<dbReference type="RefSeq" id="NP_001193965.1">
    <molecule id="Q9Y603-4"/>
    <property type="nucleotide sequence ID" value="NM_001207036.2"/>
</dbReference>
<dbReference type="RefSeq" id="NP_001193966.1">
    <molecule id="Q9Y603-2"/>
    <property type="nucleotide sequence ID" value="NM_001207037.2"/>
</dbReference>
<dbReference type="RefSeq" id="NP_001193967.1">
    <molecule id="Q9Y603-7"/>
    <property type="nucleotide sequence ID" value="NM_001207038.2"/>
</dbReference>
<dbReference type="RefSeq" id="NP_001193968.1">
    <molecule id="Q9Y603-6"/>
    <property type="nucleotide sequence ID" value="NM_001207039.2"/>
</dbReference>
<dbReference type="RefSeq" id="NP_001193969.1">
    <molecule id="Q9Y603-3"/>
    <property type="nucleotide sequence ID" value="NM_001207040.2"/>
</dbReference>
<dbReference type="RefSeq" id="NP_001193970.1">
    <molecule id="Q9Y603-8"/>
    <property type="nucleotide sequence ID" value="NM_001207041.2"/>
</dbReference>
<dbReference type="RefSeq" id="NP_057219.1">
    <molecule id="Q9Y603-1"/>
    <property type="nucleotide sequence ID" value="NM_016135.4"/>
</dbReference>
<dbReference type="PDB" id="9HK0">
    <property type="method" value="X-ray"/>
    <property type="resolution" value="1.61 A"/>
    <property type="chains" value="A=42-116"/>
</dbReference>
<dbReference type="PDBsum" id="9HK0"/>
<dbReference type="SMR" id="Q9Y603"/>
<dbReference type="BioGRID" id="119581">
    <property type="interactions" value="33"/>
</dbReference>
<dbReference type="FunCoup" id="Q9Y603">
    <property type="interactions" value="1266"/>
</dbReference>
<dbReference type="IntAct" id="Q9Y603">
    <property type="interactions" value="27"/>
</dbReference>
<dbReference type="MINT" id="Q9Y603"/>
<dbReference type="STRING" id="9606.ENSP00000341843"/>
<dbReference type="iPTMnet" id="Q9Y603"/>
<dbReference type="PhosphoSitePlus" id="Q9Y603"/>
<dbReference type="BioMuta" id="ETV7"/>
<dbReference type="DMDM" id="13124589"/>
<dbReference type="MassIVE" id="Q9Y603"/>
<dbReference type="PaxDb" id="9606-ENSP00000341843"/>
<dbReference type="PeptideAtlas" id="Q9Y603"/>
<dbReference type="Antibodypedia" id="15369">
    <property type="antibodies" value="298 antibodies from 26 providers"/>
</dbReference>
<dbReference type="DNASU" id="51513"/>
<dbReference type="Ensembl" id="ENST00000339796.9">
    <molecule id="Q9Y603-5"/>
    <property type="protein sequence ID" value="ENSP00000342260.5"/>
    <property type="gene ID" value="ENSG00000010030.14"/>
</dbReference>
<dbReference type="Ensembl" id="ENST00000340181.9">
    <molecule id="Q9Y603-1"/>
    <property type="protein sequence ID" value="ENSP00000341843.4"/>
    <property type="gene ID" value="ENSG00000010030.14"/>
</dbReference>
<dbReference type="Ensembl" id="ENST00000373737.8">
    <molecule id="Q9Y603-7"/>
    <property type="protein sequence ID" value="ENSP00000362842.4"/>
    <property type="gene ID" value="ENSG00000010030.14"/>
</dbReference>
<dbReference type="Ensembl" id="ENST00000373738.4">
    <molecule id="Q9Y603-4"/>
    <property type="protein sequence ID" value="ENSP00000362843.1"/>
    <property type="gene ID" value="ENSG00000010030.14"/>
</dbReference>
<dbReference type="Ensembl" id="ENST00000538992.3">
    <molecule id="Q9Y603-8"/>
    <property type="protein sequence ID" value="ENSP00000440592.1"/>
    <property type="gene ID" value="ENSG00000010030.14"/>
</dbReference>
<dbReference type="Ensembl" id="ENST00000615781.4">
    <molecule id="Q9Y603-2"/>
    <property type="protein sequence ID" value="ENSP00000481885.1"/>
    <property type="gene ID" value="ENSG00000010030.14"/>
</dbReference>
<dbReference type="Ensembl" id="ENST00000620358.4">
    <molecule id="Q9Y603-3"/>
    <property type="protein sequence ID" value="ENSP00000484485.1"/>
    <property type="gene ID" value="ENSG00000010030.14"/>
</dbReference>
<dbReference type="Ensembl" id="ENST00000627426.2">
    <molecule id="Q9Y603-6"/>
    <property type="protein sequence ID" value="ENSP00000486712.1"/>
    <property type="gene ID" value="ENSG00000010030.14"/>
</dbReference>
<dbReference type="GeneID" id="51513"/>
<dbReference type="KEGG" id="hsa:51513"/>
<dbReference type="MANE-Select" id="ENST00000340181.9">
    <property type="protein sequence ID" value="ENSP00000341843.4"/>
    <property type="RefSeq nucleotide sequence ID" value="NM_016135.4"/>
    <property type="RefSeq protein sequence ID" value="NP_057219.1"/>
</dbReference>
<dbReference type="UCSC" id="uc003olz.3">
    <molecule id="Q9Y603-1"/>
    <property type="organism name" value="human"/>
</dbReference>
<dbReference type="AGR" id="HGNC:18160"/>
<dbReference type="CTD" id="51513"/>
<dbReference type="DisGeNET" id="51513"/>
<dbReference type="GeneCards" id="ETV7"/>
<dbReference type="HGNC" id="HGNC:18160">
    <property type="gene designation" value="ETV7"/>
</dbReference>
<dbReference type="HPA" id="ENSG00000010030">
    <property type="expression patterns" value="Tissue enhanced (intestine, skin)"/>
</dbReference>
<dbReference type="MIM" id="605255">
    <property type="type" value="gene"/>
</dbReference>
<dbReference type="neXtProt" id="NX_Q9Y603"/>
<dbReference type="OpenTargets" id="ENSG00000010030"/>
<dbReference type="PharmGKB" id="PA134980006"/>
<dbReference type="VEuPathDB" id="HostDB:ENSG00000010030"/>
<dbReference type="eggNOG" id="KOG3804">
    <property type="taxonomic scope" value="Eukaryota"/>
</dbReference>
<dbReference type="GeneTree" id="ENSGT00940000162211"/>
<dbReference type="HOGENOM" id="CLU_037998_0_0_1"/>
<dbReference type="InParanoid" id="Q9Y603"/>
<dbReference type="OMA" id="RCEARMN"/>
<dbReference type="OrthoDB" id="10042983at2759"/>
<dbReference type="PAN-GO" id="Q9Y603">
    <property type="GO annotations" value="4 GO annotations based on evolutionary models"/>
</dbReference>
<dbReference type="PhylomeDB" id="Q9Y603"/>
<dbReference type="TreeFam" id="TF318679"/>
<dbReference type="PathwayCommons" id="Q9Y603"/>
<dbReference type="SignaLink" id="Q9Y603"/>
<dbReference type="BioGRID-ORCS" id="51513">
    <property type="hits" value="13 hits in 1175 CRISPR screens"/>
</dbReference>
<dbReference type="GeneWiki" id="ETV7"/>
<dbReference type="GenomeRNAi" id="51513"/>
<dbReference type="Pharos" id="Q9Y603">
    <property type="development level" value="Tbio"/>
</dbReference>
<dbReference type="PRO" id="PR:Q9Y603"/>
<dbReference type="Proteomes" id="UP000005640">
    <property type="component" value="Chromosome 6"/>
</dbReference>
<dbReference type="RNAct" id="Q9Y603">
    <property type="molecule type" value="protein"/>
</dbReference>
<dbReference type="Bgee" id="ENSG00000010030">
    <property type="expression patterns" value="Expressed in buccal mucosa cell and 161 other cell types or tissues"/>
</dbReference>
<dbReference type="GO" id="GO:0000785">
    <property type="term" value="C:chromatin"/>
    <property type="evidence" value="ECO:0000247"/>
    <property type="project" value="NTNU_SB"/>
</dbReference>
<dbReference type="GO" id="GO:0005654">
    <property type="term" value="C:nucleoplasm"/>
    <property type="evidence" value="ECO:0000314"/>
    <property type="project" value="HPA"/>
</dbReference>
<dbReference type="GO" id="GO:0005634">
    <property type="term" value="C:nucleus"/>
    <property type="evidence" value="ECO:0000318"/>
    <property type="project" value="GO_Central"/>
</dbReference>
<dbReference type="GO" id="GO:0000981">
    <property type="term" value="F:DNA-binding transcription factor activity, RNA polymerase II-specific"/>
    <property type="evidence" value="ECO:0000247"/>
    <property type="project" value="NTNU_SB"/>
</dbReference>
<dbReference type="GO" id="GO:0001227">
    <property type="term" value="F:DNA-binding transcription repressor activity, RNA polymerase II-specific"/>
    <property type="evidence" value="ECO:0000314"/>
    <property type="project" value="NTNU_SB"/>
</dbReference>
<dbReference type="GO" id="GO:0000977">
    <property type="term" value="F:RNA polymerase II transcription regulatory region sequence-specific DNA binding"/>
    <property type="evidence" value="ECO:0000314"/>
    <property type="project" value="NTNU_SB"/>
</dbReference>
<dbReference type="GO" id="GO:1990837">
    <property type="term" value="F:sequence-specific double-stranded DNA binding"/>
    <property type="evidence" value="ECO:0000314"/>
    <property type="project" value="ARUK-UCL"/>
</dbReference>
<dbReference type="GO" id="GO:0009887">
    <property type="term" value="P:animal organ morphogenesis"/>
    <property type="evidence" value="ECO:0000304"/>
    <property type="project" value="ProtInc"/>
</dbReference>
<dbReference type="GO" id="GO:0030154">
    <property type="term" value="P:cell differentiation"/>
    <property type="evidence" value="ECO:0000318"/>
    <property type="project" value="GO_Central"/>
</dbReference>
<dbReference type="GO" id="GO:0000122">
    <property type="term" value="P:negative regulation of transcription by RNA polymerase II"/>
    <property type="evidence" value="ECO:0000314"/>
    <property type="project" value="NTNU_SB"/>
</dbReference>
<dbReference type="GO" id="GO:0006357">
    <property type="term" value="P:regulation of transcription by RNA polymerase II"/>
    <property type="evidence" value="ECO:0000318"/>
    <property type="project" value="GO_Central"/>
</dbReference>
<dbReference type="GO" id="GO:0006366">
    <property type="term" value="P:transcription by RNA polymerase II"/>
    <property type="evidence" value="ECO:0000304"/>
    <property type="project" value="ProtInc"/>
</dbReference>
<dbReference type="CDD" id="cd08535">
    <property type="entry name" value="SAM_PNT-Tel_Yan"/>
    <property type="match status" value="1"/>
</dbReference>
<dbReference type="FunFam" id="1.10.10.10:FF:000558">
    <property type="entry name" value="ETS variant 7"/>
    <property type="match status" value="1"/>
</dbReference>
<dbReference type="FunFam" id="1.10.150.50:FF:000030">
    <property type="entry name" value="transcription factor ETV6"/>
    <property type="match status" value="1"/>
</dbReference>
<dbReference type="Gene3D" id="1.10.150.50">
    <property type="entry name" value="Transcription Factor, Ets-1"/>
    <property type="match status" value="1"/>
</dbReference>
<dbReference type="Gene3D" id="1.10.10.10">
    <property type="entry name" value="Winged helix-like DNA-binding domain superfamily/Winged helix DNA-binding domain"/>
    <property type="match status" value="1"/>
</dbReference>
<dbReference type="InterPro" id="IPR000418">
    <property type="entry name" value="Ets_dom"/>
</dbReference>
<dbReference type="InterPro" id="IPR046328">
    <property type="entry name" value="ETS_fam"/>
</dbReference>
<dbReference type="InterPro" id="IPR003118">
    <property type="entry name" value="Pointed_dom"/>
</dbReference>
<dbReference type="InterPro" id="IPR013761">
    <property type="entry name" value="SAM/pointed_sf"/>
</dbReference>
<dbReference type="InterPro" id="IPR036388">
    <property type="entry name" value="WH-like_DNA-bd_sf"/>
</dbReference>
<dbReference type="InterPro" id="IPR036390">
    <property type="entry name" value="WH_DNA-bd_sf"/>
</dbReference>
<dbReference type="PANTHER" id="PTHR11849">
    <property type="entry name" value="ETS"/>
    <property type="match status" value="1"/>
</dbReference>
<dbReference type="PANTHER" id="PTHR11849:SF77">
    <property type="entry name" value="TRANSCRIPTION FACTOR ETV7"/>
    <property type="match status" value="1"/>
</dbReference>
<dbReference type="Pfam" id="PF00178">
    <property type="entry name" value="Ets"/>
    <property type="match status" value="1"/>
</dbReference>
<dbReference type="Pfam" id="PF02198">
    <property type="entry name" value="SAM_PNT"/>
    <property type="match status" value="1"/>
</dbReference>
<dbReference type="PRINTS" id="PR00454">
    <property type="entry name" value="ETSDOMAIN"/>
</dbReference>
<dbReference type="SMART" id="SM00413">
    <property type="entry name" value="ETS"/>
    <property type="match status" value="1"/>
</dbReference>
<dbReference type="SMART" id="SM00251">
    <property type="entry name" value="SAM_PNT"/>
    <property type="match status" value="1"/>
</dbReference>
<dbReference type="SUPFAM" id="SSF47769">
    <property type="entry name" value="SAM/Pointed domain"/>
    <property type="match status" value="1"/>
</dbReference>
<dbReference type="SUPFAM" id="SSF46785">
    <property type="entry name" value="Winged helix' DNA-binding domain"/>
    <property type="match status" value="1"/>
</dbReference>
<dbReference type="PROSITE" id="PS00346">
    <property type="entry name" value="ETS_DOMAIN_2"/>
    <property type="match status" value="1"/>
</dbReference>
<dbReference type="PROSITE" id="PS50061">
    <property type="entry name" value="ETS_DOMAIN_3"/>
    <property type="match status" value="1"/>
</dbReference>
<dbReference type="PROSITE" id="PS51433">
    <property type="entry name" value="PNT"/>
    <property type="match status" value="1"/>
</dbReference>
<reference key="1">
    <citation type="journal article" date="2000" name="Blood">
        <title>Identification and characterization of a new human ETS-family transcription factor, TEL2, that is expressed in hematopoietic tissues and can associate with TEL1/ETV6.</title>
        <authorList>
            <person name="Potter M.D."/>
            <person name="Buijs A."/>
            <person name="Kreider B."/>
            <person name="van Rompaey L."/>
            <person name="Grosveld G.C."/>
        </authorList>
    </citation>
    <scope>NUCLEOTIDE SEQUENCE [MRNA] (ISOFORM B)</scope>
    <scope>CHARACTERIZATION</scope>
    <source>
        <tissue>Hematopoietic</tissue>
    </source>
</reference>
<reference key="2">
    <citation type="journal article" date="2001" name="J. Biol. Chem.">
        <title>Tel-2, a novel transcriptional repressor related to the Ets factor Tel/ETV-6.</title>
        <authorList>
            <person name="Gu X."/>
            <person name="Shin B.-H."/>
            <person name="Akbarali Y."/>
            <person name="Weiss A."/>
            <person name="Boltax J."/>
            <person name="Oettgen P."/>
            <person name="Libermann T.A."/>
        </authorList>
    </citation>
    <scope>NUCLEOTIDE SEQUENCE [MRNA] (ISOFORMS A; B; C; D; E AND F)</scope>
    <scope>CHARACTERIZATION</scope>
    <source>
        <tissue>Pancreas</tissue>
    </source>
</reference>
<reference key="3">
    <citation type="submission" date="1999-04" db="EMBL/GenBank/DDBJ databases">
        <title>TREF-a Tel related Ets factor.</title>
        <authorList>
            <person name="Smith J.L."/>
            <person name="Ostrowski M.C."/>
        </authorList>
    </citation>
    <scope>NUCLEOTIDE SEQUENCE [MRNA] (ISOFORM G)</scope>
</reference>
<reference key="4">
    <citation type="journal article" date="2000" name="Oncogene">
        <title>Characterization of a novel ETS gene, TELB encoding a protein structurally and functionally related to TEL.</title>
        <authorList>
            <person name="Poirel H."/>
            <person name="Lopez R.G."/>
            <person name="Lacronique V."/>
            <person name="Della Valle V."/>
            <person name="Mauchauffe M."/>
            <person name="Berger R."/>
            <person name="Ghysdael J."/>
            <person name="Bernard O.A."/>
        </authorList>
    </citation>
    <scope>NUCLEOTIDE SEQUENCE [MRNA] (ISOFORM B)</scope>
</reference>
<reference key="5">
    <citation type="journal article" date="2004" name="Nat. Genet.">
        <title>Complete sequencing and characterization of 21,243 full-length human cDNAs.</title>
        <authorList>
            <person name="Ota T."/>
            <person name="Suzuki Y."/>
            <person name="Nishikawa T."/>
            <person name="Otsuki T."/>
            <person name="Sugiyama T."/>
            <person name="Irie R."/>
            <person name="Wakamatsu A."/>
            <person name="Hayashi K."/>
            <person name="Sato H."/>
            <person name="Nagai K."/>
            <person name="Kimura K."/>
            <person name="Makita H."/>
            <person name="Sekine M."/>
            <person name="Obayashi M."/>
            <person name="Nishi T."/>
            <person name="Shibahara T."/>
            <person name="Tanaka T."/>
            <person name="Ishii S."/>
            <person name="Yamamoto J."/>
            <person name="Saito K."/>
            <person name="Kawai Y."/>
            <person name="Isono Y."/>
            <person name="Nakamura Y."/>
            <person name="Nagahari K."/>
            <person name="Murakami K."/>
            <person name="Yasuda T."/>
            <person name="Iwayanagi T."/>
            <person name="Wagatsuma M."/>
            <person name="Shiratori A."/>
            <person name="Sudo H."/>
            <person name="Hosoiri T."/>
            <person name="Kaku Y."/>
            <person name="Kodaira H."/>
            <person name="Kondo H."/>
            <person name="Sugawara M."/>
            <person name="Takahashi M."/>
            <person name="Kanda K."/>
            <person name="Yokoi T."/>
            <person name="Furuya T."/>
            <person name="Kikkawa E."/>
            <person name="Omura Y."/>
            <person name="Abe K."/>
            <person name="Kamihara K."/>
            <person name="Katsuta N."/>
            <person name="Sato K."/>
            <person name="Tanikawa M."/>
            <person name="Yamazaki M."/>
            <person name="Ninomiya K."/>
            <person name="Ishibashi T."/>
            <person name="Yamashita H."/>
            <person name="Murakawa K."/>
            <person name="Fujimori K."/>
            <person name="Tanai H."/>
            <person name="Kimata M."/>
            <person name="Watanabe M."/>
            <person name="Hiraoka S."/>
            <person name="Chiba Y."/>
            <person name="Ishida S."/>
            <person name="Ono Y."/>
            <person name="Takiguchi S."/>
            <person name="Watanabe S."/>
            <person name="Yosida M."/>
            <person name="Hotuta T."/>
            <person name="Kusano J."/>
            <person name="Kanehori K."/>
            <person name="Takahashi-Fujii A."/>
            <person name="Hara H."/>
            <person name="Tanase T.-O."/>
            <person name="Nomura Y."/>
            <person name="Togiya S."/>
            <person name="Komai F."/>
            <person name="Hara R."/>
            <person name="Takeuchi K."/>
            <person name="Arita M."/>
            <person name="Imose N."/>
            <person name="Musashino K."/>
            <person name="Yuuki H."/>
            <person name="Oshima A."/>
            <person name="Sasaki N."/>
            <person name="Aotsuka S."/>
            <person name="Yoshikawa Y."/>
            <person name="Matsunawa H."/>
            <person name="Ichihara T."/>
            <person name="Shiohata N."/>
            <person name="Sano S."/>
            <person name="Moriya S."/>
            <person name="Momiyama H."/>
            <person name="Satoh N."/>
            <person name="Takami S."/>
            <person name="Terashima Y."/>
            <person name="Suzuki O."/>
            <person name="Nakagawa S."/>
            <person name="Senoh A."/>
            <person name="Mizoguchi H."/>
            <person name="Goto Y."/>
            <person name="Shimizu F."/>
            <person name="Wakebe H."/>
            <person name="Hishigaki H."/>
            <person name="Watanabe T."/>
            <person name="Sugiyama A."/>
            <person name="Takemoto M."/>
            <person name="Kawakami B."/>
            <person name="Yamazaki M."/>
            <person name="Watanabe K."/>
            <person name="Kumagai A."/>
            <person name="Itakura S."/>
            <person name="Fukuzumi Y."/>
            <person name="Fujimori Y."/>
            <person name="Komiyama M."/>
            <person name="Tashiro H."/>
            <person name="Tanigami A."/>
            <person name="Fujiwara T."/>
            <person name="Ono T."/>
            <person name="Yamada K."/>
            <person name="Fujii Y."/>
            <person name="Ozaki K."/>
            <person name="Hirao M."/>
            <person name="Ohmori Y."/>
            <person name="Kawabata A."/>
            <person name="Hikiji T."/>
            <person name="Kobatake N."/>
            <person name="Inagaki H."/>
            <person name="Ikema Y."/>
            <person name="Okamoto S."/>
            <person name="Okitani R."/>
            <person name="Kawakami T."/>
            <person name="Noguchi S."/>
            <person name="Itoh T."/>
            <person name="Shigeta K."/>
            <person name="Senba T."/>
            <person name="Matsumura K."/>
            <person name="Nakajima Y."/>
            <person name="Mizuno T."/>
            <person name="Morinaga M."/>
            <person name="Sasaki M."/>
            <person name="Togashi T."/>
            <person name="Oyama M."/>
            <person name="Hata H."/>
            <person name="Watanabe M."/>
            <person name="Komatsu T."/>
            <person name="Mizushima-Sugano J."/>
            <person name="Satoh T."/>
            <person name="Shirai Y."/>
            <person name="Takahashi Y."/>
            <person name="Nakagawa K."/>
            <person name="Okumura K."/>
            <person name="Nagase T."/>
            <person name="Nomura N."/>
            <person name="Kikuchi H."/>
            <person name="Masuho Y."/>
            <person name="Yamashita R."/>
            <person name="Nakai K."/>
            <person name="Yada T."/>
            <person name="Nakamura Y."/>
            <person name="Ohara O."/>
            <person name="Isogai T."/>
            <person name="Sugano S."/>
        </authorList>
    </citation>
    <scope>NUCLEOTIDE SEQUENCE [LARGE SCALE MRNA] (ISOFORMS B; D AND H)</scope>
    <source>
        <tissue>Lung</tissue>
        <tissue>Small intestine</tissue>
        <tissue>Thymus</tissue>
    </source>
</reference>
<reference key="6">
    <citation type="journal article" date="2003" name="Nature">
        <title>The DNA sequence and analysis of human chromosome 6.</title>
        <authorList>
            <person name="Mungall A.J."/>
            <person name="Palmer S.A."/>
            <person name="Sims S.K."/>
            <person name="Edwards C.A."/>
            <person name="Ashurst J.L."/>
            <person name="Wilming L."/>
            <person name="Jones M.C."/>
            <person name="Horton R."/>
            <person name="Hunt S.E."/>
            <person name="Scott C.E."/>
            <person name="Gilbert J.G.R."/>
            <person name="Clamp M.E."/>
            <person name="Bethel G."/>
            <person name="Milne S."/>
            <person name="Ainscough R."/>
            <person name="Almeida J.P."/>
            <person name="Ambrose K.D."/>
            <person name="Andrews T.D."/>
            <person name="Ashwell R.I.S."/>
            <person name="Babbage A.K."/>
            <person name="Bagguley C.L."/>
            <person name="Bailey J."/>
            <person name="Banerjee R."/>
            <person name="Barker D.J."/>
            <person name="Barlow K.F."/>
            <person name="Bates K."/>
            <person name="Beare D.M."/>
            <person name="Beasley H."/>
            <person name="Beasley O."/>
            <person name="Bird C.P."/>
            <person name="Blakey S.E."/>
            <person name="Bray-Allen S."/>
            <person name="Brook J."/>
            <person name="Brown A.J."/>
            <person name="Brown J.Y."/>
            <person name="Burford D.C."/>
            <person name="Burrill W."/>
            <person name="Burton J."/>
            <person name="Carder C."/>
            <person name="Carter N.P."/>
            <person name="Chapman J.C."/>
            <person name="Clark S.Y."/>
            <person name="Clark G."/>
            <person name="Clee C.M."/>
            <person name="Clegg S."/>
            <person name="Cobley V."/>
            <person name="Collier R.E."/>
            <person name="Collins J.E."/>
            <person name="Colman L.K."/>
            <person name="Corby N.R."/>
            <person name="Coville G.J."/>
            <person name="Culley K.M."/>
            <person name="Dhami P."/>
            <person name="Davies J."/>
            <person name="Dunn M."/>
            <person name="Earthrowl M.E."/>
            <person name="Ellington A.E."/>
            <person name="Evans K.A."/>
            <person name="Faulkner L."/>
            <person name="Francis M.D."/>
            <person name="Frankish A."/>
            <person name="Frankland J."/>
            <person name="French L."/>
            <person name="Garner P."/>
            <person name="Garnett J."/>
            <person name="Ghori M.J."/>
            <person name="Gilby L.M."/>
            <person name="Gillson C.J."/>
            <person name="Glithero R.J."/>
            <person name="Grafham D.V."/>
            <person name="Grant M."/>
            <person name="Gribble S."/>
            <person name="Griffiths C."/>
            <person name="Griffiths M.N.D."/>
            <person name="Hall R."/>
            <person name="Halls K.S."/>
            <person name="Hammond S."/>
            <person name="Harley J.L."/>
            <person name="Hart E.A."/>
            <person name="Heath P.D."/>
            <person name="Heathcott R."/>
            <person name="Holmes S.J."/>
            <person name="Howden P.J."/>
            <person name="Howe K.L."/>
            <person name="Howell G.R."/>
            <person name="Huckle E."/>
            <person name="Humphray S.J."/>
            <person name="Humphries M.D."/>
            <person name="Hunt A.R."/>
            <person name="Johnson C.M."/>
            <person name="Joy A.A."/>
            <person name="Kay M."/>
            <person name="Keenan S.J."/>
            <person name="Kimberley A.M."/>
            <person name="King A."/>
            <person name="Laird G.K."/>
            <person name="Langford C."/>
            <person name="Lawlor S."/>
            <person name="Leongamornlert D.A."/>
            <person name="Leversha M."/>
            <person name="Lloyd C.R."/>
            <person name="Lloyd D.M."/>
            <person name="Loveland J.E."/>
            <person name="Lovell J."/>
            <person name="Martin S."/>
            <person name="Mashreghi-Mohammadi M."/>
            <person name="Maslen G.L."/>
            <person name="Matthews L."/>
            <person name="McCann O.T."/>
            <person name="McLaren S.J."/>
            <person name="McLay K."/>
            <person name="McMurray A."/>
            <person name="Moore M.J.F."/>
            <person name="Mullikin J.C."/>
            <person name="Niblett D."/>
            <person name="Nickerson T."/>
            <person name="Novik K.L."/>
            <person name="Oliver K."/>
            <person name="Overton-Larty E.K."/>
            <person name="Parker A."/>
            <person name="Patel R."/>
            <person name="Pearce A.V."/>
            <person name="Peck A.I."/>
            <person name="Phillimore B.J.C.T."/>
            <person name="Phillips S."/>
            <person name="Plumb R.W."/>
            <person name="Porter K.M."/>
            <person name="Ramsey Y."/>
            <person name="Ranby S.A."/>
            <person name="Rice C.M."/>
            <person name="Ross M.T."/>
            <person name="Searle S.M."/>
            <person name="Sehra H.K."/>
            <person name="Sheridan E."/>
            <person name="Skuce C.D."/>
            <person name="Smith S."/>
            <person name="Smith M."/>
            <person name="Spraggon L."/>
            <person name="Squares S.L."/>
            <person name="Steward C.A."/>
            <person name="Sycamore N."/>
            <person name="Tamlyn-Hall G."/>
            <person name="Tester J."/>
            <person name="Theaker A.J."/>
            <person name="Thomas D.W."/>
            <person name="Thorpe A."/>
            <person name="Tracey A."/>
            <person name="Tromans A."/>
            <person name="Tubby B."/>
            <person name="Wall M."/>
            <person name="Wallis J.M."/>
            <person name="West A.P."/>
            <person name="White S.S."/>
            <person name="Whitehead S.L."/>
            <person name="Whittaker H."/>
            <person name="Wild A."/>
            <person name="Willey D.J."/>
            <person name="Wilmer T.E."/>
            <person name="Wood J.M."/>
            <person name="Wray P.W."/>
            <person name="Wyatt J.C."/>
            <person name="Young L."/>
            <person name="Younger R.M."/>
            <person name="Bentley D.R."/>
            <person name="Coulson A."/>
            <person name="Durbin R.M."/>
            <person name="Hubbard T."/>
            <person name="Sulston J.E."/>
            <person name="Dunham I."/>
            <person name="Rogers J."/>
            <person name="Beck S."/>
        </authorList>
    </citation>
    <scope>NUCLEOTIDE SEQUENCE [LARGE SCALE GENOMIC DNA]</scope>
</reference>
<reference key="7">
    <citation type="submission" date="2005-07" db="EMBL/GenBank/DDBJ databases">
        <authorList>
            <person name="Mural R.J."/>
            <person name="Istrail S."/>
            <person name="Sutton G.G."/>
            <person name="Florea L."/>
            <person name="Halpern A.L."/>
            <person name="Mobarry C.M."/>
            <person name="Lippert R."/>
            <person name="Walenz B."/>
            <person name="Shatkay H."/>
            <person name="Dew I."/>
            <person name="Miller J.R."/>
            <person name="Flanigan M.J."/>
            <person name="Edwards N.J."/>
            <person name="Bolanos R."/>
            <person name="Fasulo D."/>
            <person name="Halldorsson B.V."/>
            <person name="Hannenhalli S."/>
            <person name="Turner R."/>
            <person name="Yooseph S."/>
            <person name="Lu F."/>
            <person name="Nusskern D.R."/>
            <person name="Shue B.C."/>
            <person name="Zheng X.H."/>
            <person name="Zhong F."/>
            <person name="Delcher A.L."/>
            <person name="Huson D.H."/>
            <person name="Kravitz S.A."/>
            <person name="Mouchard L."/>
            <person name="Reinert K."/>
            <person name="Remington K.A."/>
            <person name="Clark A.G."/>
            <person name="Waterman M.S."/>
            <person name="Eichler E.E."/>
            <person name="Adams M.D."/>
            <person name="Hunkapiller M.W."/>
            <person name="Myers E.W."/>
            <person name="Venter J.C."/>
        </authorList>
    </citation>
    <scope>NUCLEOTIDE SEQUENCE [LARGE SCALE GENOMIC DNA]</scope>
</reference>
<reference key="8">
    <citation type="journal article" date="2004" name="Genome Res.">
        <title>The status, quality, and expansion of the NIH full-length cDNA project: the Mammalian Gene Collection (MGC).</title>
        <authorList>
            <consortium name="The MGC Project Team"/>
        </authorList>
    </citation>
    <scope>NUCLEOTIDE SEQUENCE [LARGE SCALE MRNA] (ISOFORM B)</scope>
    <source>
        <tissue>Brain</tissue>
    </source>
</reference>
<name>ETV7_HUMAN</name>
<comment type="function">
    <text>Transcriptional repressor; binds to the DNA sequence 5'-CCGGAAGT-3'. Isoform A does not seem to have a repressor activity. Isoform C does not seem to have a repressor activity.</text>
</comment>
<comment type="subcellular location">
    <subcellularLocation>
        <location>Nucleus</location>
    </subcellularLocation>
</comment>
<comment type="alternative products">
    <event type="alternative splicing"/>
    <isoform>
        <id>Q9Y603-1</id>
        <name>B</name>
        <sequence type="displayed"/>
    </isoform>
    <isoform>
        <id>Q9Y603-2</id>
        <name>A</name>
        <sequence type="described" ref="VSP_001473"/>
    </isoform>
    <isoform>
        <id>Q9Y603-3</id>
        <name>C</name>
        <sequence type="described" ref="VSP_001474"/>
    </isoform>
    <isoform>
        <id>Q9Y603-4</id>
        <name>D</name>
        <sequence type="described" ref="VSP_001475"/>
    </isoform>
    <isoform>
        <id>Q9Y603-5</id>
        <name>E</name>
        <sequence type="described" ref="VSP_001477"/>
    </isoform>
    <isoform>
        <id>Q9Y603-6</id>
        <name>F</name>
        <sequence type="described" ref="VSP_001475 VSP_001477"/>
    </isoform>
    <isoform>
        <id>Q9Y603-7</id>
        <name>G</name>
        <sequence type="described" ref="VSP_001476"/>
    </isoform>
    <isoform>
        <id>Q9Y603-8</id>
        <name>H</name>
        <sequence type="described" ref="VSP_044285"/>
    </isoform>
</comment>
<comment type="tissue specificity">
    <text>Expressed in hematopoietic tissues.</text>
</comment>
<comment type="similarity">
    <text evidence="7">Belongs to the ETS family.</text>
</comment>
<proteinExistence type="evidence at protein level"/>
<keyword id="KW-0002">3D-structure</keyword>
<keyword id="KW-0025">Alternative splicing</keyword>
<keyword id="KW-0238">DNA-binding</keyword>
<keyword id="KW-0539">Nucleus</keyword>
<keyword id="KW-1267">Proteomics identification</keyword>
<keyword id="KW-1185">Reference proteome</keyword>
<keyword id="KW-0678">Repressor</keyword>
<keyword id="KW-0804">Transcription</keyword>
<keyword id="KW-0805">Transcription regulation</keyword>
<evidence type="ECO:0000255" key="1">
    <source>
        <dbReference type="PROSITE-ProRule" id="PRU00237"/>
    </source>
</evidence>
<evidence type="ECO:0000255" key="2">
    <source>
        <dbReference type="PROSITE-ProRule" id="PRU00762"/>
    </source>
</evidence>
<evidence type="ECO:0000256" key="3">
    <source>
        <dbReference type="SAM" id="MobiDB-lite"/>
    </source>
</evidence>
<evidence type="ECO:0000303" key="4">
    <source>
    </source>
</evidence>
<evidence type="ECO:0000303" key="5">
    <source>
    </source>
</evidence>
<evidence type="ECO:0000303" key="6">
    <source ref="3"/>
</evidence>
<evidence type="ECO:0000305" key="7"/>
<accession>Q9Y603</accession>
<accession>B3KVC2</accession>
<accession>B4DVB6</accession>
<accession>B4E1G4</accession>
<accession>Q5R3L3</accession>
<accession>Q5R3L4</accession>
<accession>Q9NZ65</accession>
<accession>Q9NZ66</accession>
<accession>Q9NZ68</accession>
<accession>Q9NZR8</accession>
<accession>Q9UNJ7</accession>
<accession>Q9Y5K4</accession>
<accession>Q9Y604</accession>
<gene>
    <name type="primary">ETV7</name>
    <name type="synonym">TEL2</name>
    <name type="synonym">TELB</name>
    <name type="synonym">TREF</name>
</gene>